<gene>
    <name evidence="1" type="primary">pdxT</name>
    <name type="ordered locus">Achl_2035</name>
</gene>
<protein>
    <recommendedName>
        <fullName evidence="1">Pyridoxal 5'-phosphate synthase subunit PdxT</fullName>
        <ecNumber evidence="1">4.3.3.6</ecNumber>
    </recommendedName>
    <alternativeName>
        <fullName evidence="1">Pdx2</fullName>
    </alternativeName>
    <alternativeName>
        <fullName evidence="1">Pyridoxal 5'-phosphate synthase glutaminase subunit</fullName>
        <ecNumber evidence="1">3.5.1.2</ecNumber>
    </alternativeName>
</protein>
<organism>
    <name type="scientific">Pseudarthrobacter chlorophenolicus (strain ATCC 700700 / DSM 12829 / CIP 107037 / JCM 12360 / KCTC 9906 / NCIMB 13794 / A6)</name>
    <name type="common">Arthrobacter chlorophenolicus</name>
    <dbReference type="NCBI Taxonomy" id="452863"/>
    <lineage>
        <taxon>Bacteria</taxon>
        <taxon>Bacillati</taxon>
        <taxon>Actinomycetota</taxon>
        <taxon>Actinomycetes</taxon>
        <taxon>Micrococcales</taxon>
        <taxon>Micrococcaceae</taxon>
        <taxon>Pseudarthrobacter</taxon>
    </lineage>
</organism>
<accession>B8H9E0</accession>
<dbReference type="EC" id="4.3.3.6" evidence="1"/>
<dbReference type="EC" id="3.5.1.2" evidence="1"/>
<dbReference type="EMBL" id="CP001341">
    <property type="protein sequence ID" value="ACL40009.1"/>
    <property type="molecule type" value="Genomic_DNA"/>
</dbReference>
<dbReference type="RefSeq" id="WP_015937227.1">
    <property type="nucleotide sequence ID" value="NC_011886.1"/>
</dbReference>
<dbReference type="SMR" id="B8H9E0"/>
<dbReference type="STRING" id="452863.Achl_2035"/>
<dbReference type="MEROPS" id="C26.A32"/>
<dbReference type="KEGG" id="ach:Achl_2035"/>
<dbReference type="eggNOG" id="COG0311">
    <property type="taxonomic scope" value="Bacteria"/>
</dbReference>
<dbReference type="HOGENOM" id="CLU_069674_2_0_11"/>
<dbReference type="OrthoDB" id="9810320at2"/>
<dbReference type="UniPathway" id="UPA00245"/>
<dbReference type="Proteomes" id="UP000002505">
    <property type="component" value="Chromosome"/>
</dbReference>
<dbReference type="GO" id="GO:0005829">
    <property type="term" value="C:cytosol"/>
    <property type="evidence" value="ECO:0007669"/>
    <property type="project" value="TreeGrafter"/>
</dbReference>
<dbReference type="GO" id="GO:1903600">
    <property type="term" value="C:glutaminase complex"/>
    <property type="evidence" value="ECO:0007669"/>
    <property type="project" value="TreeGrafter"/>
</dbReference>
<dbReference type="GO" id="GO:0004359">
    <property type="term" value="F:glutaminase activity"/>
    <property type="evidence" value="ECO:0007669"/>
    <property type="project" value="UniProtKB-UniRule"/>
</dbReference>
<dbReference type="GO" id="GO:0036381">
    <property type="term" value="F:pyridoxal 5'-phosphate synthase (glutamine hydrolysing) activity"/>
    <property type="evidence" value="ECO:0007669"/>
    <property type="project" value="UniProtKB-UniRule"/>
</dbReference>
<dbReference type="GO" id="GO:0006543">
    <property type="term" value="P:glutamine catabolic process"/>
    <property type="evidence" value="ECO:0007669"/>
    <property type="project" value="UniProtKB-UniRule"/>
</dbReference>
<dbReference type="GO" id="GO:0042823">
    <property type="term" value="P:pyridoxal phosphate biosynthetic process"/>
    <property type="evidence" value="ECO:0007669"/>
    <property type="project" value="UniProtKB-UniRule"/>
</dbReference>
<dbReference type="GO" id="GO:0008614">
    <property type="term" value="P:pyridoxine metabolic process"/>
    <property type="evidence" value="ECO:0007669"/>
    <property type="project" value="TreeGrafter"/>
</dbReference>
<dbReference type="CDD" id="cd01749">
    <property type="entry name" value="GATase1_PB"/>
    <property type="match status" value="1"/>
</dbReference>
<dbReference type="FunFam" id="3.40.50.880:FF:000010">
    <property type="entry name" value="uncharacterized protein LOC100176842 isoform X2"/>
    <property type="match status" value="1"/>
</dbReference>
<dbReference type="Gene3D" id="3.40.50.880">
    <property type="match status" value="1"/>
</dbReference>
<dbReference type="HAMAP" id="MF_01615">
    <property type="entry name" value="PdxT"/>
    <property type="match status" value="1"/>
</dbReference>
<dbReference type="InterPro" id="IPR029062">
    <property type="entry name" value="Class_I_gatase-like"/>
</dbReference>
<dbReference type="InterPro" id="IPR002161">
    <property type="entry name" value="PdxT/SNO"/>
</dbReference>
<dbReference type="InterPro" id="IPR021196">
    <property type="entry name" value="PdxT/SNO_CS"/>
</dbReference>
<dbReference type="NCBIfam" id="TIGR03800">
    <property type="entry name" value="PLP_synth_Pdx2"/>
    <property type="match status" value="1"/>
</dbReference>
<dbReference type="PANTHER" id="PTHR31559">
    <property type="entry name" value="PYRIDOXAL 5'-PHOSPHATE SYNTHASE SUBUNIT SNO"/>
    <property type="match status" value="1"/>
</dbReference>
<dbReference type="PANTHER" id="PTHR31559:SF0">
    <property type="entry name" value="PYRIDOXAL 5'-PHOSPHATE SYNTHASE SUBUNIT SNO1-RELATED"/>
    <property type="match status" value="1"/>
</dbReference>
<dbReference type="Pfam" id="PF01174">
    <property type="entry name" value="SNO"/>
    <property type="match status" value="1"/>
</dbReference>
<dbReference type="PIRSF" id="PIRSF005639">
    <property type="entry name" value="Glut_amidoT_SNO"/>
    <property type="match status" value="1"/>
</dbReference>
<dbReference type="SUPFAM" id="SSF52317">
    <property type="entry name" value="Class I glutamine amidotransferase-like"/>
    <property type="match status" value="1"/>
</dbReference>
<dbReference type="PROSITE" id="PS01236">
    <property type="entry name" value="PDXT_SNO_1"/>
    <property type="match status" value="1"/>
</dbReference>
<dbReference type="PROSITE" id="PS51130">
    <property type="entry name" value="PDXT_SNO_2"/>
    <property type="match status" value="1"/>
</dbReference>
<reference key="1">
    <citation type="submission" date="2009-01" db="EMBL/GenBank/DDBJ databases">
        <title>Complete sequence of chromosome of Arthrobacter chlorophenolicus A6.</title>
        <authorList>
            <consortium name="US DOE Joint Genome Institute"/>
            <person name="Lucas S."/>
            <person name="Copeland A."/>
            <person name="Lapidus A."/>
            <person name="Glavina del Rio T."/>
            <person name="Tice H."/>
            <person name="Bruce D."/>
            <person name="Goodwin L."/>
            <person name="Pitluck S."/>
            <person name="Goltsman E."/>
            <person name="Clum A."/>
            <person name="Larimer F."/>
            <person name="Land M."/>
            <person name="Hauser L."/>
            <person name="Kyrpides N."/>
            <person name="Mikhailova N."/>
            <person name="Jansson J."/>
            <person name="Richardson P."/>
        </authorList>
    </citation>
    <scope>NUCLEOTIDE SEQUENCE [LARGE SCALE GENOMIC DNA]</scope>
    <source>
        <strain>ATCC 700700 / DSM 12829 / CIP 107037 / JCM 12360 / KCTC 9906 / NCIMB 13794 / A6</strain>
    </source>
</reference>
<comment type="function">
    <text evidence="1">Catalyzes the hydrolysis of glutamine to glutamate and ammonia as part of the biosynthesis of pyridoxal 5'-phosphate. The resulting ammonia molecule is channeled to the active site of PdxS.</text>
</comment>
<comment type="catalytic activity">
    <reaction evidence="1">
        <text>aldehydo-D-ribose 5-phosphate + D-glyceraldehyde 3-phosphate + L-glutamine = pyridoxal 5'-phosphate + L-glutamate + phosphate + 3 H2O + H(+)</text>
        <dbReference type="Rhea" id="RHEA:31507"/>
        <dbReference type="ChEBI" id="CHEBI:15377"/>
        <dbReference type="ChEBI" id="CHEBI:15378"/>
        <dbReference type="ChEBI" id="CHEBI:29985"/>
        <dbReference type="ChEBI" id="CHEBI:43474"/>
        <dbReference type="ChEBI" id="CHEBI:58273"/>
        <dbReference type="ChEBI" id="CHEBI:58359"/>
        <dbReference type="ChEBI" id="CHEBI:59776"/>
        <dbReference type="ChEBI" id="CHEBI:597326"/>
        <dbReference type="EC" id="4.3.3.6"/>
    </reaction>
</comment>
<comment type="catalytic activity">
    <reaction evidence="1">
        <text>L-glutamine + H2O = L-glutamate + NH4(+)</text>
        <dbReference type="Rhea" id="RHEA:15889"/>
        <dbReference type="ChEBI" id="CHEBI:15377"/>
        <dbReference type="ChEBI" id="CHEBI:28938"/>
        <dbReference type="ChEBI" id="CHEBI:29985"/>
        <dbReference type="ChEBI" id="CHEBI:58359"/>
        <dbReference type="EC" id="3.5.1.2"/>
    </reaction>
</comment>
<comment type="pathway">
    <text evidence="1">Cofactor biosynthesis; pyridoxal 5'-phosphate biosynthesis.</text>
</comment>
<comment type="subunit">
    <text evidence="1">In the presence of PdxS, forms a dodecamer of heterodimers. Only shows activity in the heterodimer.</text>
</comment>
<comment type="similarity">
    <text evidence="1">Belongs to the glutaminase PdxT/SNO family.</text>
</comment>
<name>PDXT_PSECP</name>
<proteinExistence type="inferred from homology"/>
<feature type="chain" id="PRO_1000185868" description="Pyridoxal 5'-phosphate synthase subunit PdxT">
    <location>
        <begin position="1"/>
        <end position="236"/>
    </location>
</feature>
<feature type="active site" description="Nucleophile" evidence="1">
    <location>
        <position position="93"/>
    </location>
</feature>
<feature type="active site" description="Charge relay system" evidence="1">
    <location>
        <position position="215"/>
    </location>
</feature>
<feature type="active site" description="Charge relay system" evidence="1">
    <location>
        <position position="217"/>
    </location>
</feature>
<feature type="binding site" evidence="1">
    <location>
        <begin position="61"/>
        <end position="63"/>
    </location>
    <ligand>
        <name>L-glutamine</name>
        <dbReference type="ChEBI" id="CHEBI:58359"/>
    </ligand>
</feature>
<feature type="binding site" evidence="1">
    <location>
        <position position="127"/>
    </location>
    <ligand>
        <name>L-glutamine</name>
        <dbReference type="ChEBI" id="CHEBI:58359"/>
    </ligand>
</feature>
<feature type="binding site" evidence="1">
    <location>
        <begin position="163"/>
        <end position="164"/>
    </location>
    <ligand>
        <name>L-glutamine</name>
        <dbReference type="ChEBI" id="CHEBI:58359"/>
    </ligand>
</feature>
<keyword id="KW-0315">Glutamine amidotransferase</keyword>
<keyword id="KW-0378">Hydrolase</keyword>
<keyword id="KW-0456">Lyase</keyword>
<keyword id="KW-0663">Pyridoxal phosphate</keyword>
<sequence>MTNSLSAESARVGSGLRIGVLALQGDFREHLRAAAESGAEGVSVRRPRELDGLDGLIIPGGESTAIDKLARAFELAGPLRERIAGGLPVYGSCAGMILLASDIADPATDLSGAPQQTFGGLDMTVRRNAFGRQRESFETDLDFKGLEFSATDADVAPVHAVFIRGPWVERVGPGVEILAQVEPADPEHASHTAELPGAARIVAVRSGRLLATSFHPEVTGEKRVHELFIRMIRGEA</sequence>
<evidence type="ECO:0000255" key="1">
    <source>
        <dbReference type="HAMAP-Rule" id="MF_01615"/>
    </source>
</evidence>